<protein>
    <recommendedName>
        <fullName evidence="1">Regulatory protein RecX</fullName>
    </recommendedName>
</protein>
<reference key="1">
    <citation type="journal article" date="2009" name="PLoS Genet.">
        <title>Organised genome dynamics in the Escherichia coli species results in highly diverse adaptive paths.</title>
        <authorList>
            <person name="Touchon M."/>
            <person name="Hoede C."/>
            <person name="Tenaillon O."/>
            <person name="Barbe V."/>
            <person name="Baeriswyl S."/>
            <person name="Bidet P."/>
            <person name="Bingen E."/>
            <person name="Bonacorsi S."/>
            <person name="Bouchier C."/>
            <person name="Bouvet O."/>
            <person name="Calteau A."/>
            <person name="Chiapello H."/>
            <person name="Clermont O."/>
            <person name="Cruveiller S."/>
            <person name="Danchin A."/>
            <person name="Diard M."/>
            <person name="Dossat C."/>
            <person name="Karoui M.E."/>
            <person name="Frapy E."/>
            <person name="Garry L."/>
            <person name="Ghigo J.M."/>
            <person name="Gilles A.M."/>
            <person name="Johnson J."/>
            <person name="Le Bouguenec C."/>
            <person name="Lescat M."/>
            <person name="Mangenot S."/>
            <person name="Martinez-Jehanne V."/>
            <person name="Matic I."/>
            <person name="Nassif X."/>
            <person name="Oztas S."/>
            <person name="Petit M.A."/>
            <person name="Pichon C."/>
            <person name="Rouy Z."/>
            <person name="Ruf C.S."/>
            <person name="Schneider D."/>
            <person name="Tourret J."/>
            <person name="Vacherie B."/>
            <person name="Vallenet D."/>
            <person name="Medigue C."/>
            <person name="Rocha E.P.C."/>
            <person name="Denamur E."/>
        </authorList>
    </citation>
    <scope>NUCLEOTIDE SEQUENCE [LARGE SCALE GENOMIC DNA]</scope>
    <source>
        <strain>S88 / ExPEC</strain>
    </source>
</reference>
<proteinExistence type="inferred from homology"/>
<sequence length="166" mass="19410">MTESTSRRPAYARLLDRAVRILAVRDHSEQELRRKLAAPIMGKNGPEEIDATAEDYERVIAWCHEHGYLDDSRFVARFIASRSRKGYGPARIRQELNQKGISREATEKAMRECDIDWCALARDQATRKYGEPLPTVFSEKVKIQRFLLYRGYLMEDIQDIWRNFAD</sequence>
<comment type="function">
    <text evidence="1">Modulates RecA activity.</text>
</comment>
<comment type="subcellular location">
    <subcellularLocation>
        <location evidence="1">Cytoplasm</location>
    </subcellularLocation>
</comment>
<comment type="similarity">
    <text evidence="1">Belongs to the RecX family.</text>
</comment>
<accession>B7MKG7</accession>
<dbReference type="EMBL" id="CU928161">
    <property type="protein sequence ID" value="CAR04207.1"/>
    <property type="molecule type" value="Genomic_DNA"/>
</dbReference>
<dbReference type="RefSeq" id="WP_000140506.1">
    <property type="nucleotide sequence ID" value="NC_011742.1"/>
</dbReference>
<dbReference type="SMR" id="B7MKG7"/>
<dbReference type="GeneID" id="75172780"/>
<dbReference type="KEGG" id="ecz:ECS88_2961"/>
<dbReference type="HOGENOM" id="CLU_066607_3_2_6"/>
<dbReference type="Proteomes" id="UP000000747">
    <property type="component" value="Chromosome"/>
</dbReference>
<dbReference type="GO" id="GO:0005737">
    <property type="term" value="C:cytoplasm"/>
    <property type="evidence" value="ECO:0007669"/>
    <property type="project" value="UniProtKB-SubCell"/>
</dbReference>
<dbReference type="GO" id="GO:0006282">
    <property type="term" value="P:regulation of DNA repair"/>
    <property type="evidence" value="ECO:0007669"/>
    <property type="project" value="UniProtKB-UniRule"/>
</dbReference>
<dbReference type="FunFam" id="1.10.10.10:FF:000133">
    <property type="entry name" value="Regulatory protein RecX"/>
    <property type="match status" value="1"/>
</dbReference>
<dbReference type="FunFam" id="1.10.10.10:FF:000134">
    <property type="entry name" value="Regulatory protein RecX"/>
    <property type="match status" value="1"/>
</dbReference>
<dbReference type="FunFam" id="1.10.10.10:FF:000209">
    <property type="entry name" value="Regulatory protein RecX"/>
    <property type="match status" value="1"/>
</dbReference>
<dbReference type="Gene3D" id="1.10.10.10">
    <property type="entry name" value="Winged helix-like DNA-binding domain superfamily/Winged helix DNA-binding domain"/>
    <property type="match status" value="3"/>
</dbReference>
<dbReference type="HAMAP" id="MF_01114">
    <property type="entry name" value="RecX"/>
    <property type="match status" value="1"/>
</dbReference>
<dbReference type="InterPro" id="IPR053926">
    <property type="entry name" value="RecX_HTH_1st"/>
</dbReference>
<dbReference type="InterPro" id="IPR053924">
    <property type="entry name" value="RecX_HTH_2nd"/>
</dbReference>
<dbReference type="InterPro" id="IPR053925">
    <property type="entry name" value="RecX_HTH_3rd"/>
</dbReference>
<dbReference type="InterPro" id="IPR003783">
    <property type="entry name" value="Regulatory_RecX"/>
</dbReference>
<dbReference type="InterPro" id="IPR036388">
    <property type="entry name" value="WH-like_DNA-bd_sf"/>
</dbReference>
<dbReference type="NCBIfam" id="NF001052">
    <property type="entry name" value="PRK00117.1-1"/>
    <property type="match status" value="1"/>
</dbReference>
<dbReference type="PANTHER" id="PTHR33602">
    <property type="entry name" value="REGULATORY PROTEIN RECX FAMILY PROTEIN"/>
    <property type="match status" value="1"/>
</dbReference>
<dbReference type="PANTHER" id="PTHR33602:SF1">
    <property type="entry name" value="REGULATORY PROTEIN RECX FAMILY PROTEIN"/>
    <property type="match status" value="1"/>
</dbReference>
<dbReference type="Pfam" id="PF21982">
    <property type="entry name" value="RecX_HTH1"/>
    <property type="match status" value="1"/>
</dbReference>
<dbReference type="Pfam" id="PF02631">
    <property type="entry name" value="RecX_HTH2"/>
    <property type="match status" value="1"/>
</dbReference>
<dbReference type="Pfam" id="PF21981">
    <property type="entry name" value="RecX_HTH3"/>
    <property type="match status" value="1"/>
</dbReference>
<organism>
    <name type="scientific">Escherichia coli O45:K1 (strain S88 / ExPEC)</name>
    <dbReference type="NCBI Taxonomy" id="585035"/>
    <lineage>
        <taxon>Bacteria</taxon>
        <taxon>Pseudomonadati</taxon>
        <taxon>Pseudomonadota</taxon>
        <taxon>Gammaproteobacteria</taxon>
        <taxon>Enterobacterales</taxon>
        <taxon>Enterobacteriaceae</taxon>
        <taxon>Escherichia</taxon>
    </lineage>
</organism>
<feature type="chain" id="PRO_1000137160" description="Regulatory protein RecX">
    <location>
        <begin position="1"/>
        <end position="166"/>
    </location>
</feature>
<name>RECX_ECO45</name>
<keyword id="KW-0963">Cytoplasm</keyword>
<keyword id="KW-1185">Reference proteome</keyword>
<gene>
    <name evidence="1" type="primary">recX</name>
    <name type="ordered locus">ECS88_2961</name>
</gene>
<evidence type="ECO:0000255" key="1">
    <source>
        <dbReference type="HAMAP-Rule" id="MF_01114"/>
    </source>
</evidence>